<reference key="1">
    <citation type="journal article" date="2006" name="J. Bacteriol.">
        <title>Comparison of the genome sequence of the poultry pathogen Bordetella avium with those of B. bronchiseptica, B. pertussis, and B. parapertussis reveals extensive diversity in surface structures associated with host interaction.</title>
        <authorList>
            <person name="Sebaihia M."/>
            <person name="Preston A."/>
            <person name="Maskell D.J."/>
            <person name="Kuzmiak H."/>
            <person name="Connell T.D."/>
            <person name="King N.D."/>
            <person name="Orndorff P.E."/>
            <person name="Miyamoto D.M."/>
            <person name="Thomson N.R."/>
            <person name="Harris D."/>
            <person name="Goble A."/>
            <person name="Lord A."/>
            <person name="Murphy L."/>
            <person name="Quail M.A."/>
            <person name="Rutter S."/>
            <person name="Squares R."/>
            <person name="Squares S."/>
            <person name="Woodward J."/>
            <person name="Parkhill J."/>
            <person name="Temple L.M."/>
        </authorList>
    </citation>
    <scope>NUCLEOTIDE SEQUENCE [LARGE SCALE GENOMIC DNA]</scope>
    <source>
        <strain>197N</strain>
    </source>
</reference>
<gene>
    <name evidence="1" type="primary">infA2</name>
    <name type="ordered locus">BAV0882</name>
</gene>
<accession>Q2KW23</accession>
<keyword id="KW-0963">Cytoplasm</keyword>
<keyword id="KW-0396">Initiation factor</keyword>
<keyword id="KW-0648">Protein biosynthesis</keyword>
<keyword id="KW-1185">Reference proteome</keyword>
<keyword id="KW-0694">RNA-binding</keyword>
<keyword id="KW-0699">rRNA-binding</keyword>
<evidence type="ECO:0000255" key="1">
    <source>
        <dbReference type="HAMAP-Rule" id="MF_00075"/>
    </source>
</evidence>
<comment type="function">
    <text evidence="1">One of the essential components for the initiation of protein synthesis. Stabilizes the binding of IF-2 and IF-3 on the 30S subunit to which N-formylmethionyl-tRNA(fMet) subsequently binds. Helps modulate mRNA selection, yielding the 30S pre-initiation complex (PIC). Upon addition of the 50S ribosomal subunit IF-1, IF-2 and IF-3 are released leaving the mature 70S translation initiation complex.</text>
</comment>
<comment type="subunit">
    <text evidence="1">Component of the 30S ribosomal translation pre-initiation complex which assembles on the 30S ribosome in the order IF-2 and IF-3, IF-1 and N-formylmethionyl-tRNA(fMet); mRNA recruitment can occur at any time during PIC assembly.</text>
</comment>
<comment type="subcellular location">
    <subcellularLocation>
        <location evidence="1">Cytoplasm</location>
    </subcellularLocation>
</comment>
<comment type="similarity">
    <text evidence="1">Belongs to the IF-1 family.</text>
</comment>
<feature type="chain" id="PRO_0000263768" description="Translation initiation factor IF-1 2">
    <location>
        <begin position="1"/>
        <end position="88"/>
    </location>
</feature>
<feature type="domain" description="S1-like" evidence="1">
    <location>
        <begin position="1"/>
        <end position="72"/>
    </location>
</feature>
<organism>
    <name type="scientific">Bordetella avium (strain 197N)</name>
    <dbReference type="NCBI Taxonomy" id="360910"/>
    <lineage>
        <taxon>Bacteria</taxon>
        <taxon>Pseudomonadati</taxon>
        <taxon>Pseudomonadota</taxon>
        <taxon>Betaproteobacteria</taxon>
        <taxon>Burkholderiales</taxon>
        <taxon>Alcaligenaceae</taxon>
        <taxon>Bordetella</taxon>
    </lineage>
</organism>
<dbReference type="EMBL" id="AM167904">
    <property type="protein sequence ID" value="CAJ48493.1"/>
    <property type="molecule type" value="Genomic_DNA"/>
</dbReference>
<dbReference type="RefSeq" id="WP_012416573.1">
    <property type="nucleotide sequence ID" value="NC_010645.1"/>
</dbReference>
<dbReference type="SMR" id="Q2KW23"/>
<dbReference type="STRING" id="360910.BAV0882"/>
<dbReference type="GeneID" id="92935927"/>
<dbReference type="KEGG" id="bav:BAV0882"/>
<dbReference type="eggNOG" id="COG0361">
    <property type="taxonomic scope" value="Bacteria"/>
</dbReference>
<dbReference type="HOGENOM" id="CLU_151267_4_1_4"/>
<dbReference type="OrthoDB" id="9803250at2"/>
<dbReference type="Proteomes" id="UP000001977">
    <property type="component" value="Chromosome"/>
</dbReference>
<dbReference type="GO" id="GO:0005829">
    <property type="term" value="C:cytosol"/>
    <property type="evidence" value="ECO:0007669"/>
    <property type="project" value="TreeGrafter"/>
</dbReference>
<dbReference type="GO" id="GO:0043022">
    <property type="term" value="F:ribosome binding"/>
    <property type="evidence" value="ECO:0007669"/>
    <property type="project" value="UniProtKB-UniRule"/>
</dbReference>
<dbReference type="GO" id="GO:0019843">
    <property type="term" value="F:rRNA binding"/>
    <property type="evidence" value="ECO:0007669"/>
    <property type="project" value="UniProtKB-UniRule"/>
</dbReference>
<dbReference type="GO" id="GO:0003743">
    <property type="term" value="F:translation initiation factor activity"/>
    <property type="evidence" value="ECO:0007669"/>
    <property type="project" value="UniProtKB-UniRule"/>
</dbReference>
<dbReference type="CDD" id="cd04451">
    <property type="entry name" value="S1_IF1"/>
    <property type="match status" value="1"/>
</dbReference>
<dbReference type="FunFam" id="2.40.50.140:FF:000002">
    <property type="entry name" value="Translation initiation factor IF-1"/>
    <property type="match status" value="1"/>
</dbReference>
<dbReference type="Gene3D" id="2.40.50.140">
    <property type="entry name" value="Nucleic acid-binding proteins"/>
    <property type="match status" value="1"/>
</dbReference>
<dbReference type="HAMAP" id="MF_00075">
    <property type="entry name" value="IF_1"/>
    <property type="match status" value="1"/>
</dbReference>
<dbReference type="InterPro" id="IPR012340">
    <property type="entry name" value="NA-bd_OB-fold"/>
</dbReference>
<dbReference type="InterPro" id="IPR006196">
    <property type="entry name" value="RNA-binding_domain_S1_IF1"/>
</dbReference>
<dbReference type="InterPro" id="IPR004368">
    <property type="entry name" value="TIF_IF1"/>
</dbReference>
<dbReference type="NCBIfam" id="TIGR00008">
    <property type="entry name" value="infA"/>
    <property type="match status" value="1"/>
</dbReference>
<dbReference type="PANTHER" id="PTHR33370">
    <property type="entry name" value="TRANSLATION INITIATION FACTOR IF-1, CHLOROPLASTIC"/>
    <property type="match status" value="1"/>
</dbReference>
<dbReference type="PANTHER" id="PTHR33370:SF1">
    <property type="entry name" value="TRANSLATION INITIATION FACTOR IF-1, CHLOROPLASTIC"/>
    <property type="match status" value="1"/>
</dbReference>
<dbReference type="Pfam" id="PF01176">
    <property type="entry name" value="eIF-1a"/>
    <property type="match status" value="1"/>
</dbReference>
<dbReference type="SUPFAM" id="SSF50249">
    <property type="entry name" value="Nucleic acid-binding proteins"/>
    <property type="match status" value="1"/>
</dbReference>
<dbReference type="PROSITE" id="PS50832">
    <property type="entry name" value="S1_IF1_TYPE"/>
    <property type="match status" value="1"/>
</dbReference>
<protein>
    <recommendedName>
        <fullName evidence="1">Translation initiation factor IF-1 2</fullName>
    </recommendedName>
</protein>
<name>IF12_BORA1</name>
<proteinExistence type="inferred from homology"/>
<sequence>MAKEELIELQGVVDEVLPDSRYRVTLDNGVAVGAYASGRIRKHRIRILAGDRVTLEMSPYDLTKGRINFRHKDERPSSAPANRNFVRR</sequence>